<name>HSCA_BURO1</name>
<gene>
    <name evidence="1" type="primary">hscA</name>
    <name type="ordered locus">Bcen_5955</name>
</gene>
<feature type="chain" id="PRO_1000044843" description="Chaperone protein HscA homolog">
    <location>
        <begin position="1"/>
        <end position="622"/>
    </location>
</feature>
<accession>Q1BHT5</accession>
<comment type="function">
    <text evidence="1">Chaperone involved in the maturation of iron-sulfur cluster-containing proteins. Has a low intrinsic ATPase activity which is markedly stimulated by HscB.</text>
</comment>
<comment type="similarity">
    <text evidence="1">Belongs to the heat shock protein 70 family.</text>
</comment>
<protein>
    <recommendedName>
        <fullName evidence="1">Chaperone protein HscA homolog</fullName>
    </recommendedName>
</protein>
<reference key="1">
    <citation type="submission" date="2006-05" db="EMBL/GenBank/DDBJ databases">
        <title>Complete sequence of chromosome 3 of Burkholderia cenocepacia AU 1054.</title>
        <authorList>
            <consortium name="US DOE Joint Genome Institute"/>
            <person name="Copeland A."/>
            <person name="Lucas S."/>
            <person name="Lapidus A."/>
            <person name="Barry K."/>
            <person name="Detter J.C."/>
            <person name="Glavina del Rio T."/>
            <person name="Hammon N."/>
            <person name="Israni S."/>
            <person name="Dalin E."/>
            <person name="Tice H."/>
            <person name="Pitluck S."/>
            <person name="Chain P."/>
            <person name="Malfatti S."/>
            <person name="Shin M."/>
            <person name="Vergez L."/>
            <person name="Schmutz J."/>
            <person name="Larimer F."/>
            <person name="Land M."/>
            <person name="Hauser L."/>
            <person name="Kyrpides N."/>
            <person name="Lykidis A."/>
            <person name="LiPuma J.J."/>
            <person name="Konstantinidis K."/>
            <person name="Tiedje J.M."/>
            <person name="Richardson P."/>
        </authorList>
    </citation>
    <scope>NUCLEOTIDE SEQUENCE [LARGE SCALE GENOMIC DNA]</scope>
    <source>
        <strain>AU 1054</strain>
    </source>
</reference>
<keyword id="KW-0067">ATP-binding</keyword>
<keyword id="KW-0143">Chaperone</keyword>
<keyword id="KW-0547">Nucleotide-binding</keyword>
<evidence type="ECO:0000255" key="1">
    <source>
        <dbReference type="HAMAP-Rule" id="MF_00679"/>
    </source>
</evidence>
<organism>
    <name type="scientific">Burkholderia orbicola (strain AU 1054)</name>
    <dbReference type="NCBI Taxonomy" id="331271"/>
    <lineage>
        <taxon>Bacteria</taxon>
        <taxon>Pseudomonadati</taxon>
        <taxon>Pseudomonadota</taxon>
        <taxon>Betaproteobacteria</taxon>
        <taxon>Burkholderiales</taxon>
        <taxon>Burkholderiaceae</taxon>
        <taxon>Burkholderia</taxon>
        <taxon>Burkholderia cepacia complex</taxon>
        <taxon>Burkholderia orbicola</taxon>
    </lineage>
</organism>
<dbReference type="EMBL" id="CP000380">
    <property type="protein sequence ID" value="ABF80820.1"/>
    <property type="molecule type" value="Genomic_DNA"/>
</dbReference>
<dbReference type="SMR" id="Q1BHT5"/>
<dbReference type="HOGENOM" id="CLU_005965_2_4_4"/>
<dbReference type="GO" id="GO:0005524">
    <property type="term" value="F:ATP binding"/>
    <property type="evidence" value="ECO:0007669"/>
    <property type="project" value="UniProtKB-KW"/>
</dbReference>
<dbReference type="GO" id="GO:0016887">
    <property type="term" value="F:ATP hydrolysis activity"/>
    <property type="evidence" value="ECO:0007669"/>
    <property type="project" value="UniProtKB-UniRule"/>
</dbReference>
<dbReference type="GO" id="GO:0140662">
    <property type="term" value="F:ATP-dependent protein folding chaperone"/>
    <property type="evidence" value="ECO:0007669"/>
    <property type="project" value="InterPro"/>
</dbReference>
<dbReference type="GO" id="GO:0051082">
    <property type="term" value="F:unfolded protein binding"/>
    <property type="evidence" value="ECO:0007669"/>
    <property type="project" value="InterPro"/>
</dbReference>
<dbReference type="GO" id="GO:0016226">
    <property type="term" value="P:iron-sulfur cluster assembly"/>
    <property type="evidence" value="ECO:0007669"/>
    <property type="project" value="InterPro"/>
</dbReference>
<dbReference type="CDD" id="cd10236">
    <property type="entry name" value="ASKHA_NBD_HSP70_HscA"/>
    <property type="match status" value="1"/>
</dbReference>
<dbReference type="FunFam" id="3.30.420.40:FF:000046">
    <property type="entry name" value="Chaperone protein HscA"/>
    <property type="match status" value="1"/>
</dbReference>
<dbReference type="FunFam" id="2.60.34.10:FF:000005">
    <property type="entry name" value="Chaperone protein HscA homolog"/>
    <property type="match status" value="1"/>
</dbReference>
<dbReference type="Gene3D" id="1.20.1270.10">
    <property type="match status" value="1"/>
</dbReference>
<dbReference type="Gene3D" id="3.30.420.40">
    <property type="match status" value="2"/>
</dbReference>
<dbReference type="Gene3D" id="3.90.640.10">
    <property type="entry name" value="Actin, Chain A, domain 4"/>
    <property type="match status" value="1"/>
</dbReference>
<dbReference type="Gene3D" id="2.60.34.10">
    <property type="entry name" value="Substrate Binding Domain Of DNAk, Chain A, domain 1"/>
    <property type="match status" value="1"/>
</dbReference>
<dbReference type="HAMAP" id="MF_00679">
    <property type="entry name" value="HscA"/>
    <property type="match status" value="1"/>
</dbReference>
<dbReference type="InterPro" id="IPR043129">
    <property type="entry name" value="ATPase_NBD"/>
</dbReference>
<dbReference type="InterPro" id="IPR018181">
    <property type="entry name" value="Heat_shock_70_CS"/>
</dbReference>
<dbReference type="InterPro" id="IPR042039">
    <property type="entry name" value="HscA_NBD"/>
</dbReference>
<dbReference type="InterPro" id="IPR029048">
    <property type="entry name" value="HSP70_C_sf"/>
</dbReference>
<dbReference type="InterPro" id="IPR029047">
    <property type="entry name" value="HSP70_peptide-bd_sf"/>
</dbReference>
<dbReference type="InterPro" id="IPR013126">
    <property type="entry name" value="Hsp_70_fam"/>
</dbReference>
<dbReference type="InterPro" id="IPR010236">
    <property type="entry name" value="ISC_FeS_clus_asmbl_HscA"/>
</dbReference>
<dbReference type="NCBIfam" id="TIGR01991">
    <property type="entry name" value="HscA"/>
    <property type="match status" value="1"/>
</dbReference>
<dbReference type="NCBIfam" id="NF003520">
    <property type="entry name" value="PRK05183.1"/>
    <property type="match status" value="1"/>
</dbReference>
<dbReference type="PANTHER" id="PTHR19375">
    <property type="entry name" value="HEAT SHOCK PROTEIN 70KDA"/>
    <property type="match status" value="1"/>
</dbReference>
<dbReference type="Pfam" id="PF00012">
    <property type="entry name" value="HSP70"/>
    <property type="match status" value="1"/>
</dbReference>
<dbReference type="PRINTS" id="PR00301">
    <property type="entry name" value="HEATSHOCK70"/>
</dbReference>
<dbReference type="SUPFAM" id="SSF53067">
    <property type="entry name" value="Actin-like ATPase domain"/>
    <property type="match status" value="2"/>
</dbReference>
<dbReference type="SUPFAM" id="SSF100934">
    <property type="entry name" value="Heat shock protein 70kD (HSP70), C-terminal subdomain"/>
    <property type="match status" value="1"/>
</dbReference>
<dbReference type="SUPFAM" id="SSF100920">
    <property type="entry name" value="Heat shock protein 70kD (HSP70), peptide-binding domain"/>
    <property type="match status" value="1"/>
</dbReference>
<dbReference type="PROSITE" id="PS00297">
    <property type="entry name" value="HSP70_1"/>
    <property type="match status" value="1"/>
</dbReference>
<dbReference type="PROSITE" id="PS00329">
    <property type="entry name" value="HSP70_2"/>
    <property type="match status" value="1"/>
</dbReference>
<dbReference type="PROSITE" id="PS01036">
    <property type="entry name" value="HSP70_3"/>
    <property type="match status" value="1"/>
</dbReference>
<sequence length="622" mass="66019">MALLQISEPGMAPAPHQRRLAVGIDLGTTNSLVAAVRNSVPEVLPDEAGRVLLPSVVRYLEKGGRRIGHEAKEQAATDPRNTIVSVKRFMGRGKAEVEGAANAPYEFVDAPGMVQIRTIDGVKSPVEVSAEILATLRYRAEDSLGDDLVGAVITVPAYFDDAQRQATKDAARLAGLNVLRLLNEPTAAAIAYGLDNAAEGLYAVYDLGGGTFDLSILKLTKGVFEVLAAGGDSALGGDDFDHALFGHVLAQAGIDAKTLAPEDVRLLLDRVRVLKEALSSAPEAALDVTLSSGAHLVQTISHDTFASLVEPLVQRTLTPTRKALRDAQVTPADIKGVVLVGGATRMPVIRDAVAKYFGQPPLVNLDPDQVVALGAAIQADLLAGNRGTGDDWLLLDVIPLSLGVETMGGLVEKIIPRNSTIPIARAQEFTTFKDGQTAMAIHVVQGERELVADCRSLARFELRGIPPMTAGAARIRVTYQVDADGLLSVFAREQLSGVEASVVVKPSYGLADDDIAKMLEDSFKTAEIDMRARALREAQVEAERMLEATQAALAADGELLETDERAQVDALAAALRAVAQGDDTNAIEAATKALADGTDEFAARRMDKSIKRALSGRRLDEI</sequence>
<proteinExistence type="inferred from homology"/>